<feature type="chain" id="PRO_0000363224" description="Septin-2B">
    <location>
        <begin position="1"/>
        <end position="355"/>
    </location>
</feature>
<feature type="domain" description="Septin-type G" evidence="2">
    <location>
        <begin position="33"/>
        <end position="305"/>
    </location>
</feature>
<feature type="region of interest" description="G1 motif" evidence="2">
    <location>
        <begin position="43"/>
        <end position="50"/>
    </location>
</feature>
<feature type="region of interest" description="G3 motif" evidence="2">
    <location>
        <begin position="100"/>
        <end position="103"/>
    </location>
</feature>
<feature type="region of interest" description="G4 motif" evidence="2">
    <location>
        <begin position="181"/>
        <end position="184"/>
    </location>
</feature>
<feature type="region of interest" description="Important for dimerization" evidence="1">
    <location>
        <begin position="259"/>
        <end position="269"/>
    </location>
</feature>
<feature type="binding site" evidence="1">
    <location>
        <begin position="43"/>
        <end position="50"/>
    </location>
    <ligand>
        <name>GTP</name>
        <dbReference type="ChEBI" id="CHEBI:37565"/>
    </ligand>
</feature>
<feature type="binding site" evidence="1">
    <location>
        <position position="77"/>
    </location>
    <ligand>
        <name>GTP</name>
        <dbReference type="ChEBI" id="CHEBI:37565"/>
    </ligand>
</feature>
<feature type="binding site" evidence="1">
    <location>
        <position position="103"/>
    </location>
    <ligand>
        <name>GTP</name>
        <dbReference type="ChEBI" id="CHEBI:37565"/>
    </ligand>
</feature>
<feature type="binding site" evidence="1">
    <location>
        <begin position="182"/>
        <end position="190"/>
    </location>
    <ligand>
        <name>GTP</name>
        <dbReference type="ChEBI" id="CHEBI:37565"/>
    </ligand>
</feature>
<feature type="binding site" evidence="1">
    <location>
        <position position="240"/>
    </location>
    <ligand>
        <name>GTP</name>
        <dbReference type="ChEBI" id="CHEBI:37565"/>
    </ligand>
</feature>
<feature type="binding site" evidence="1">
    <location>
        <position position="255"/>
    </location>
    <ligand>
        <name>GTP</name>
        <dbReference type="ChEBI" id="CHEBI:37565"/>
    </ligand>
</feature>
<feature type="site" description="Important for dimerization" evidence="1">
    <location>
        <position position="155"/>
    </location>
</feature>
<comment type="function">
    <text evidence="1">Filament-forming cytoskeletal GTPase. Required for normal organization of the actin cytoskeleton. Plays a role in the biogenesis of polarized columnar-shaped epithelium. Required for the progression through mitosis through regulation of chromosome congression. During anaphase, may be required for chromosome segregation and spindle elongation. Plays a role in ciliogenesis and collective cell movements including convergent extension during gastrulation. In cilia, required for the integrity of the diffusion barrier at the base of the primary cilium that prevents diffusion of transmembrane proteins between the cilia and plasma membranes. Controls cell shape and not polarization of cells during convergent extension (By similarity).</text>
</comment>
<comment type="subunit">
    <text evidence="1">Septins polymerize into heterooligomeric protein complexes that form filaments, and associate with cellular membranes, actin filaments and microtubules. GTPase activity is required for filament formation. Can form heterooligomers with other family members and form filaments. Interacts with wdpcp (By similarity).</text>
</comment>
<comment type="subcellular location">
    <subcellularLocation>
        <location evidence="1">Cytoplasm</location>
    </subcellularLocation>
    <subcellularLocation>
        <location evidence="1">Cytoplasm</location>
        <location evidence="1">Cytoskeleton</location>
    </subcellularLocation>
    <subcellularLocation>
        <location evidence="1">Cytoplasm</location>
        <location evidence="1">Cytoskeleton</location>
        <location evidence="1">Spindle</location>
    </subcellularLocation>
    <subcellularLocation>
        <location evidence="1">Cleavage furrow</location>
    </subcellularLocation>
    <subcellularLocation>
        <location evidence="1">Midbody</location>
    </subcellularLocation>
    <subcellularLocation>
        <location evidence="1">Cytoplasm</location>
        <location evidence="1">Cell cortex</location>
    </subcellularLocation>
    <subcellularLocation>
        <location evidence="1">Cell projection</location>
        <location evidence="1">Cilium membrane</location>
    </subcellularLocation>
    <text evidence="1">Localizes at the base of the cilia near the morphological distinction between the cilia and plasma membranes.</text>
</comment>
<comment type="similarity">
    <text evidence="2">Belongs to the TRAFAC class TrmE-Era-EngA-EngB-Septin-like GTPase superfamily. Septin GTPase family.</text>
</comment>
<proteinExistence type="evidence at transcript level"/>
<sequence>MSKQQAQFTNPETPGYVGFANLPNQVHRKSVRKGFEFTLMVVGESGLGKSTLINSLFLTDLYPERVVPGAADKIERTVEIEASTVEIEERGVKLRLTVVDTPGYGDAMNCVDCFKPIISYVDNQFERYLHDESGLNRRHIVDNRVHCCFYFISPFGHGLKPLDVEFMKALHNKVNIVPVIAKADTLTLRERERLKRRVLDEIEEHGIKIYQLPDAESDEDEDFKEQTRLLKASIPFTVVGSNQLIEAKGKKVRGRLYPWGVVEVENPEHNDFLKLRTMLITHMQDLQEVTQDLHYENFRSERLKKGVASKVENVEVTKDQILQEKEAELRRMQEMIARMQAQMQIQSQSGDAQHL</sequence>
<reference key="1">
    <citation type="submission" date="2006-11" db="EMBL/GenBank/DDBJ databases">
        <authorList>
            <consortium name="NIH - Xenopus Gene Collection (XGC) project"/>
        </authorList>
    </citation>
    <scope>NUCLEOTIDE SEQUENCE [LARGE SCALE MRNA]</scope>
    <source>
        <tissue>Testis</tissue>
    </source>
</reference>
<organism>
    <name type="scientific">Xenopus tropicalis</name>
    <name type="common">Western clawed frog</name>
    <name type="synonym">Silurana tropicalis</name>
    <dbReference type="NCBI Taxonomy" id="8364"/>
    <lineage>
        <taxon>Eukaryota</taxon>
        <taxon>Metazoa</taxon>
        <taxon>Chordata</taxon>
        <taxon>Craniata</taxon>
        <taxon>Vertebrata</taxon>
        <taxon>Euteleostomi</taxon>
        <taxon>Amphibia</taxon>
        <taxon>Batrachia</taxon>
        <taxon>Anura</taxon>
        <taxon>Pipoidea</taxon>
        <taxon>Pipidae</taxon>
        <taxon>Xenopodinae</taxon>
        <taxon>Xenopus</taxon>
        <taxon>Silurana</taxon>
    </lineage>
</organism>
<accession>A1L0Y5</accession>
<name>SEP2B_XENTR</name>
<gene>
    <name type="primary">sept2-B</name>
</gene>
<evidence type="ECO:0000250" key="1"/>
<evidence type="ECO:0000255" key="2">
    <source>
        <dbReference type="PROSITE-ProRule" id="PRU01056"/>
    </source>
</evidence>
<dbReference type="EMBL" id="BC127290">
    <property type="protein sequence ID" value="AAI27291.1"/>
    <property type="molecule type" value="mRNA"/>
</dbReference>
<dbReference type="SMR" id="A1L0Y5"/>
<dbReference type="FunCoup" id="A1L0Y5">
    <property type="interactions" value="2593"/>
</dbReference>
<dbReference type="STRING" id="8364.ENSXETP00000044933"/>
<dbReference type="PaxDb" id="8364-ENSXETP00000026555"/>
<dbReference type="DNASU" id="100036706"/>
<dbReference type="GeneID" id="100036706"/>
<dbReference type="KEGG" id="xtr:100036706"/>
<dbReference type="AGR" id="Xenbase:XB-GENE-480201"/>
<dbReference type="CTD" id="4735"/>
<dbReference type="Xenbase" id="XB-GENE-480201">
    <property type="gene designation" value="septin2"/>
</dbReference>
<dbReference type="eggNOG" id="KOG2655">
    <property type="taxonomic scope" value="Eukaryota"/>
</dbReference>
<dbReference type="HOGENOM" id="CLU_017718_0_0_1"/>
<dbReference type="InParanoid" id="A1L0Y5"/>
<dbReference type="OMA" id="EASHAEI"/>
<dbReference type="OrthoDB" id="416553at2759"/>
<dbReference type="PhylomeDB" id="A1L0Y5"/>
<dbReference type="TreeFam" id="TF101079"/>
<dbReference type="Proteomes" id="UP000008143">
    <property type="component" value="Chromosome 5"/>
</dbReference>
<dbReference type="Bgee" id="ENSXETG00000012166">
    <property type="expression patterns" value="Expressed in embryo and 15 other cell types or tissues"/>
</dbReference>
<dbReference type="ExpressionAtlas" id="A1L0Y5">
    <property type="expression patterns" value="baseline"/>
</dbReference>
<dbReference type="GO" id="GO:0005938">
    <property type="term" value="C:cell cortex"/>
    <property type="evidence" value="ECO:0007669"/>
    <property type="project" value="UniProtKB-SubCell"/>
</dbReference>
<dbReference type="GO" id="GO:0060170">
    <property type="term" value="C:ciliary membrane"/>
    <property type="evidence" value="ECO:0000250"/>
    <property type="project" value="UniProtKB"/>
</dbReference>
<dbReference type="GO" id="GO:0032154">
    <property type="term" value="C:cleavage furrow"/>
    <property type="evidence" value="ECO:0007669"/>
    <property type="project" value="UniProtKB-SubCell"/>
</dbReference>
<dbReference type="GO" id="GO:0005737">
    <property type="term" value="C:cytoplasm"/>
    <property type="evidence" value="ECO:0000250"/>
    <property type="project" value="UniProtKB"/>
</dbReference>
<dbReference type="GO" id="GO:0030496">
    <property type="term" value="C:midbody"/>
    <property type="evidence" value="ECO:0007669"/>
    <property type="project" value="UniProtKB-SubCell"/>
</dbReference>
<dbReference type="GO" id="GO:0005819">
    <property type="term" value="C:spindle"/>
    <property type="evidence" value="ECO:0007669"/>
    <property type="project" value="UniProtKB-SubCell"/>
</dbReference>
<dbReference type="GO" id="GO:0005525">
    <property type="term" value="F:GTP binding"/>
    <property type="evidence" value="ECO:0007669"/>
    <property type="project" value="UniProtKB-KW"/>
</dbReference>
<dbReference type="GO" id="GO:0051301">
    <property type="term" value="P:cell division"/>
    <property type="evidence" value="ECO:0007669"/>
    <property type="project" value="UniProtKB-KW"/>
</dbReference>
<dbReference type="GO" id="GO:0060271">
    <property type="term" value="P:cilium assembly"/>
    <property type="evidence" value="ECO:0000250"/>
    <property type="project" value="UniProtKB"/>
</dbReference>
<dbReference type="GO" id="GO:0007224">
    <property type="term" value="P:smoothened signaling pathway"/>
    <property type="evidence" value="ECO:0000250"/>
    <property type="project" value="UniProtKB"/>
</dbReference>
<dbReference type="CDD" id="cd01850">
    <property type="entry name" value="CDC_Septin"/>
    <property type="match status" value="1"/>
</dbReference>
<dbReference type="FunFam" id="3.40.50.300:FF:000064">
    <property type="entry name" value="Septin 4"/>
    <property type="match status" value="1"/>
</dbReference>
<dbReference type="Gene3D" id="3.40.50.300">
    <property type="entry name" value="P-loop containing nucleotide triphosphate hydrolases"/>
    <property type="match status" value="1"/>
</dbReference>
<dbReference type="InterPro" id="IPR030379">
    <property type="entry name" value="G_SEPTIN_dom"/>
</dbReference>
<dbReference type="InterPro" id="IPR027417">
    <property type="entry name" value="P-loop_NTPase"/>
</dbReference>
<dbReference type="InterPro" id="IPR016491">
    <property type="entry name" value="Septin"/>
</dbReference>
<dbReference type="InterPro" id="IPR008113">
    <property type="entry name" value="Septin2"/>
</dbReference>
<dbReference type="PANTHER" id="PTHR18884">
    <property type="entry name" value="SEPTIN"/>
    <property type="match status" value="1"/>
</dbReference>
<dbReference type="Pfam" id="PF00735">
    <property type="entry name" value="Septin"/>
    <property type="match status" value="1"/>
</dbReference>
<dbReference type="PIRSF" id="PIRSF006698">
    <property type="entry name" value="Septin"/>
    <property type="match status" value="1"/>
</dbReference>
<dbReference type="PRINTS" id="PR01740">
    <property type="entry name" value="SEPTIN2"/>
</dbReference>
<dbReference type="SUPFAM" id="SSF52540">
    <property type="entry name" value="P-loop containing nucleoside triphosphate hydrolases"/>
    <property type="match status" value="1"/>
</dbReference>
<dbReference type="PROSITE" id="PS51719">
    <property type="entry name" value="G_SEPTIN"/>
    <property type="match status" value="1"/>
</dbReference>
<protein>
    <recommendedName>
        <fullName>Septin-2B</fullName>
    </recommendedName>
</protein>
<keyword id="KW-0131">Cell cycle</keyword>
<keyword id="KW-0132">Cell division</keyword>
<keyword id="KW-1003">Cell membrane</keyword>
<keyword id="KW-0966">Cell projection</keyword>
<keyword id="KW-0963">Cytoplasm</keyword>
<keyword id="KW-0206">Cytoskeleton</keyword>
<keyword id="KW-0342">GTP-binding</keyword>
<keyword id="KW-0472">Membrane</keyword>
<keyword id="KW-0498">Mitosis</keyword>
<keyword id="KW-0547">Nucleotide-binding</keyword>
<keyword id="KW-1185">Reference proteome</keyword>